<feature type="chain" id="PRO_0000287449" description="Protein Aster-B">
    <location>
        <begin position="1"/>
        <end position="738"/>
    </location>
</feature>
<feature type="transmembrane region" description="Helical" evidence="2">
    <location>
        <begin position="623"/>
        <end position="643"/>
    </location>
</feature>
<feature type="domain" description="GRAM" evidence="2">
    <location>
        <begin position="96"/>
        <end position="163"/>
    </location>
</feature>
<feature type="domain" description="VASt" evidence="3">
    <location>
        <begin position="372"/>
        <end position="543"/>
    </location>
</feature>
<feature type="region of interest" description="Disordered" evidence="4">
    <location>
        <begin position="1"/>
        <end position="81"/>
    </location>
</feature>
<feature type="region of interest" description="Disordered" evidence="4">
    <location>
        <begin position="254"/>
        <end position="301"/>
    </location>
</feature>
<feature type="region of interest" description="Disordered" evidence="4">
    <location>
        <begin position="544"/>
        <end position="566"/>
    </location>
</feature>
<feature type="compositionally biased region" description="Polar residues" evidence="4">
    <location>
        <begin position="8"/>
        <end position="19"/>
    </location>
</feature>
<feature type="compositionally biased region" description="Basic and acidic residues" evidence="4">
    <location>
        <begin position="41"/>
        <end position="51"/>
    </location>
</feature>
<feature type="compositionally biased region" description="Low complexity" evidence="4">
    <location>
        <begin position="59"/>
        <end position="70"/>
    </location>
</feature>
<feature type="compositionally biased region" description="Polar residues" evidence="4">
    <location>
        <begin position="259"/>
        <end position="268"/>
    </location>
</feature>
<feature type="compositionally biased region" description="Polar residues" evidence="4">
    <location>
        <begin position="281"/>
        <end position="295"/>
    </location>
</feature>
<feature type="compositionally biased region" description="Basic and acidic residues" evidence="4">
    <location>
        <begin position="545"/>
        <end position="556"/>
    </location>
</feature>
<feature type="modified residue" description="Phosphoserine" evidence="1">
    <location>
        <position position="28"/>
    </location>
</feature>
<feature type="modified residue" description="Phosphoserine" evidence="10">
    <location>
        <position position="30"/>
    </location>
</feature>
<feature type="modified residue" description="Phosphoserine" evidence="9 10">
    <location>
        <position position="274"/>
    </location>
</feature>
<feature type="modified residue" description="Phosphotyrosine" evidence="9">
    <location>
        <position position="389"/>
    </location>
</feature>
<feature type="modified residue" description="Phosphoserine" evidence="10">
    <location>
        <position position="550"/>
    </location>
</feature>
<feature type="modified residue" description="Phosphoserine" evidence="9">
    <location>
        <position position="581"/>
    </location>
</feature>
<feature type="modified residue" description="Phosphothreonine" evidence="1">
    <location>
        <position position="584"/>
    </location>
</feature>
<feature type="modified residue" description="Phosphothreonine" evidence="9">
    <location>
        <position position="585"/>
    </location>
</feature>
<feature type="modified residue" description="Phosphothreonine" evidence="1">
    <location>
        <position position="587"/>
    </location>
</feature>
<feature type="splice variant" id="VSP_025469" description="In isoform 3." evidence="7">
    <location>
        <begin position="1"/>
        <end position="309"/>
    </location>
</feature>
<feature type="splice variant" id="VSP_025470" description="In isoform 2." evidence="6">
    <location>
        <begin position="1"/>
        <end position="40"/>
    </location>
</feature>
<feature type="splice variant" id="VSP_057573" description="In isoform 4.">
    <original>K</original>
    <variation>KSHKRLSK</variation>
    <location>
        <position position="78"/>
    </location>
</feature>
<feature type="splice variant" id="VSP_025471" description="In isoform 3." evidence="7">
    <original>EGDGSLEKELAIDNIMGEKIEMIAPVNSPSLDFNDNEDIPTELSDSSDTHDE</original>
    <variation>MPTSSAVLLRVLSIPLLTVLILARDLSALGGCPWGPLPLRCHCLLPDPLFCA</variation>
    <location>
        <begin position="310"/>
        <end position="361"/>
    </location>
</feature>
<feature type="splice variant" id="VSP_025472" description="In isoform 3." evidence="7">
    <location>
        <begin position="631"/>
        <end position="634"/>
    </location>
</feature>
<feature type="sequence conflict" description="In Ref. 3; BAG54507." evidence="8" ref="3">
    <original>N</original>
    <variation>H</variation>
    <location>
        <position position="336"/>
    </location>
</feature>
<reference key="1">
    <citation type="journal article" date="1999" name="DNA Res.">
        <title>Prediction of the coding sequences of unidentified human genes. XV. The complete sequences of 100 new cDNA clones from brain which code for large proteins in vitro.</title>
        <authorList>
            <person name="Nagase T."/>
            <person name="Ishikawa K."/>
            <person name="Kikuno R."/>
            <person name="Hirosawa M."/>
            <person name="Nomura N."/>
            <person name="Ohara O."/>
        </authorList>
    </citation>
    <scope>NUCLEOTIDE SEQUENCE [LARGE SCALE MRNA] (ISOFORM 2)</scope>
    <source>
        <tissue>Brain</tissue>
    </source>
</reference>
<reference key="2">
    <citation type="journal article" date="2003" name="Genome Res.">
        <title>The secreted protein discovery initiative (SPDI), a large-scale effort to identify novel human secreted and transmembrane proteins: a bioinformatics assessment.</title>
        <authorList>
            <person name="Clark H.F."/>
            <person name="Gurney A.L."/>
            <person name="Abaya E."/>
            <person name="Baker K."/>
            <person name="Baldwin D.T."/>
            <person name="Brush J."/>
            <person name="Chen J."/>
            <person name="Chow B."/>
            <person name="Chui C."/>
            <person name="Crowley C."/>
            <person name="Currell B."/>
            <person name="Deuel B."/>
            <person name="Dowd P."/>
            <person name="Eaton D."/>
            <person name="Foster J.S."/>
            <person name="Grimaldi C."/>
            <person name="Gu Q."/>
            <person name="Hass P.E."/>
            <person name="Heldens S."/>
            <person name="Huang A."/>
            <person name="Kim H.S."/>
            <person name="Klimowski L."/>
            <person name="Jin Y."/>
            <person name="Johnson S."/>
            <person name="Lee J."/>
            <person name="Lewis L."/>
            <person name="Liao D."/>
            <person name="Mark M.R."/>
            <person name="Robbie E."/>
            <person name="Sanchez C."/>
            <person name="Schoenfeld J."/>
            <person name="Seshagiri S."/>
            <person name="Simmons L."/>
            <person name="Singh J."/>
            <person name="Smith V."/>
            <person name="Stinson J."/>
            <person name="Vagts A."/>
            <person name="Vandlen R.L."/>
            <person name="Watanabe C."/>
            <person name="Wieand D."/>
            <person name="Woods K."/>
            <person name="Xie M.-H."/>
            <person name="Yansura D.G."/>
            <person name="Yi S."/>
            <person name="Yu G."/>
            <person name="Yuan J."/>
            <person name="Zhang M."/>
            <person name="Zhang Z."/>
            <person name="Goddard A.D."/>
            <person name="Wood W.I."/>
            <person name="Godowski P.J."/>
            <person name="Gray A.M."/>
        </authorList>
    </citation>
    <scope>NUCLEOTIDE SEQUENCE [LARGE SCALE MRNA] (ISOFORM 3)</scope>
</reference>
<reference key="3">
    <citation type="journal article" date="2004" name="Nat. Genet.">
        <title>Complete sequencing and characterization of 21,243 full-length human cDNAs.</title>
        <authorList>
            <person name="Ota T."/>
            <person name="Suzuki Y."/>
            <person name="Nishikawa T."/>
            <person name="Otsuki T."/>
            <person name="Sugiyama T."/>
            <person name="Irie R."/>
            <person name="Wakamatsu A."/>
            <person name="Hayashi K."/>
            <person name="Sato H."/>
            <person name="Nagai K."/>
            <person name="Kimura K."/>
            <person name="Makita H."/>
            <person name="Sekine M."/>
            <person name="Obayashi M."/>
            <person name="Nishi T."/>
            <person name="Shibahara T."/>
            <person name="Tanaka T."/>
            <person name="Ishii S."/>
            <person name="Yamamoto J."/>
            <person name="Saito K."/>
            <person name="Kawai Y."/>
            <person name="Isono Y."/>
            <person name="Nakamura Y."/>
            <person name="Nagahari K."/>
            <person name="Murakami K."/>
            <person name="Yasuda T."/>
            <person name="Iwayanagi T."/>
            <person name="Wagatsuma M."/>
            <person name="Shiratori A."/>
            <person name="Sudo H."/>
            <person name="Hosoiri T."/>
            <person name="Kaku Y."/>
            <person name="Kodaira H."/>
            <person name="Kondo H."/>
            <person name="Sugawara M."/>
            <person name="Takahashi M."/>
            <person name="Kanda K."/>
            <person name="Yokoi T."/>
            <person name="Furuya T."/>
            <person name="Kikkawa E."/>
            <person name="Omura Y."/>
            <person name="Abe K."/>
            <person name="Kamihara K."/>
            <person name="Katsuta N."/>
            <person name="Sato K."/>
            <person name="Tanikawa M."/>
            <person name="Yamazaki M."/>
            <person name="Ninomiya K."/>
            <person name="Ishibashi T."/>
            <person name="Yamashita H."/>
            <person name="Murakawa K."/>
            <person name="Fujimori K."/>
            <person name="Tanai H."/>
            <person name="Kimata M."/>
            <person name="Watanabe M."/>
            <person name="Hiraoka S."/>
            <person name="Chiba Y."/>
            <person name="Ishida S."/>
            <person name="Ono Y."/>
            <person name="Takiguchi S."/>
            <person name="Watanabe S."/>
            <person name="Yosida M."/>
            <person name="Hotuta T."/>
            <person name="Kusano J."/>
            <person name="Kanehori K."/>
            <person name="Takahashi-Fujii A."/>
            <person name="Hara H."/>
            <person name="Tanase T.-O."/>
            <person name="Nomura Y."/>
            <person name="Togiya S."/>
            <person name="Komai F."/>
            <person name="Hara R."/>
            <person name="Takeuchi K."/>
            <person name="Arita M."/>
            <person name="Imose N."/>
            <person name="Musashino K."/>
            <person name="Yuuki H."/>
            <person name="Oshima A."/>
            <person name="Sasaki N."/>
            <person name="Aotsuka S."/>
            <person name="Yoshikawa Y."/>
            <person name="Matsunawa H."/>
            <person name="Ichihara T."/>
            <person name="Shiohata N."/>
            <person name="Sano S."/>
            <person name="Moriya S."/>
            <person name="Momiyama H."/>
            <person name="Satoh N."/>
            <person name="Takami S."/>
            <person name="Terashima Y."/>
            <person name="Suzuki O."/>
            <person name="Nakagawa S."/>
            <person name="Senoh A."/>
            <person name="Mizoguchi H."/>
            <person name="Goto Y."/>
            <person name="Shimizu F."/>
            <person name="Wakebe H."/>
            <person name="Hishigaki H."/>
            <person name="Watanabe T."/>
            <person name="Sugiyama A."/>
            <person name="Takemoto M."/>
            <person name="Kawakami B."/>
            <person name="Yamazaki M."/>
            <person name="Watanabe K."/>
            <person name="Kumagai A."/>
            <person name="Itakura S."/>
            <person name="Fukuzumi Y."/>
            <person name="Fujimori Y."/>
            <person name="Komiyama M."/>
            <person name="Tashiro H."/>
            <person name="Tanigami A."/>
            <person name="Fujiwara T."/>
            <person name="Ono T."/>
            <person name="Yamada K."/>
            <person name="Fujii Y."/>
            <person name="Ozaki K."/>
            <person name="Hirao M."/>
            <person name="Ohmori Y."/>
            <person name="Kawabata A."/>
            <person name="Hikiji T."/>
            <person name="Kobatake N."/>
            <person name="Inagaki H."/>
            <person name="Ikema Y."/>
            <person name="Okamoto S."/>
            <person name="Okitani R."/>
            <person name="Kawakami T."/>
            <person name="Noguchi S."/>
            <person name="Itoh T."/>
            <person name="Shigeta K."/>
            <person name="Senba T."/>
            <person name="Matsumura K."/>
            <person name="Nakajima Y."/>
            <person name="Mizuno T."/>
            <person name="Morinaga M."/>
            <person name="Sasaki M."/>
            <person name="Togashi T."/>
            <person name="Oyama M."/>
            <person name="Hata H."/>
            <person name="Watanabe M."/>
            <person name="Komatsu T."/>
            <person name="Mizushima-Sugano J."/>
            <person name="Satoh T."/>
            <person name="Shirai Y."/>
            <person name="Takahashi Y."/>
            <person name="Nakagawa K."/>
            <person name="Okumura K."/>
            <person name="Nagase T."/>
            <person name="Nomura N."/>
            <person name="Kikuchi H."/>
            <person name="Masuho Y."/>
            <person name="Yamashita R."/>
            <person name="Nakai K."/>
            <person name="Yada T."/>
            <person name="Nakamura Y."/>
            <person name="Ohara O."/>
            <person name="Isogai T."/>
            <person name="Sugano S."/>
        </authorList>
    </citation>
    <scope>NUCLEOTIDE SEQUENCE [LARGE SCALE MRNA] (ISOFORM 4)</scope>
    <source>
        <tissue>Thalamus</tissue>
    </source>
</reference>
<reference key="4">
    <citation type="journal article" date="2006" name="Nature">
        <title>Human chromosome 11 DNA sequence and analysis including novel gene identification.</title>
        <authorList>
            <person name="Taylor T.D."/>
            <person name="Noguchi H."/>
            <person name="Totoki Y."/>
            <person name="Toyoda A."/>
            <person name="Kuroki Y."/>
            <person name="Dewar K."/>
            <person name="Lloyd C."/>
            <person name="Itoh T."/>
            <person name="Takeda T."/>
            <person name="Kim D.-W."/>
            <person name="She X."/>
            <person name="Barlow K.F."/>
            <person name="Bloom T."/>
            <person name="Bruford E."/>
            <person name="Chang J.L."/>
            <person name="Cuomo C.A."/>
            <person name="Eichler E."/>
            <person name="FitzGerald M.G."/>
            <person name="Jaffe D.B."/>
            <person name="LaButti K."/>
            <person name="Nicol R."/>
            <person name="Park H.-S."/>
            <person name="Seaman C."/>
            <person name="Sougnez C."/>
            <person name="Yang X."/>
            <person name="Zimmer A.R."/>
            <person name="Zody M.C."/>
            <person name="Birren B.W."/>
            <person name="Nusbaum C."/>
            <person name="Fujiyama A."/>
            <person name="Hattori M."/>
            <person name="Rogers J."/>
            <person name="Lander E.S."/>
            <person name="Sakaki Y."/>
        </authorList>
    </citation>
    <scope>NUCLEOTIDE SEQUENCE [LARGE SCALE GENOMIC DNA]</scope>
</reference>
<reference key="5">
    <citation type="journal article" date="2004" name="Genome Res.">
        <title>The status, quality, and expansion of the NIH full-length cDNA project: the Mammalian Gene Collection (MGC).</title>
        <authorList>
            <consortium name="The MGC Project Team"/>
        </authorList>
    </citation>
    <scope>NUCLEOTIDE SEQUENCE [LARGE SCALE MRNA] (ISOFORM 1)</scope>
</reference>
<reference key="6">
    <citation type="journal article" date="2008" name="Proc. Natl. Acad. Sci. U.S.A.">
        <title>A quantitative atlas of mitotic phosphorylation.</title>
        <authorList>
            <person name="Dephoure N."/>
            <person name="Zhou C."/>
            <person name="Villen J."/>
            <person name="Beausoleil S.A."/>
            <person name="Bakalarski C.E."/>
            <person name="Elledge S.J."/>
            <person name="Gygi S.P."/>
        </authorList>
    </citation>
    <scope>PHOSPHORYLATION [LARGE SCALE ANALYSIS] AT SER-274; TYR-389; SER-581 AND THR-585</scope>
    <scope>IDENTIFICATION BY MASS SPECTROMETRY [LARGE SCALE ANALYSIS]</scope>
    <source>
        <tissue>Cervix carcinoma</tissue>
    </source>
</reference>
<reference key="7">
    <citation type="journal article" date="2013" name="J. Proteome Res.">
        <title>Toward a comprehensive characterization of a human cancer cell phosphoproteome.</title>
        <authorList>
            <person name="Zhou H."/>
            <person name="Di Palma S."/>
            <person name="Preisinger C."/>
            <person name="Peng M."/>
            <person name="Polat A.N."/>
            <person name="Heck A.J."/>
            <person name="Mohammed S."/>
        </authorList>
    </citation>
    <scope>PHOSPHORYLATION [LARGE SCALE ANALYSIS] AT SER-30; SER-274 AND SER-550</scope>
    <scope>IDENTIFICATION BY MASS SPECTROMETRY [LARGE SCALE ANALYSIS]</scope>
    <source>
        <tissue>Cervix carcinoma</tissue>
    </source>
</reference>
<reference key="8">
    <citation type="journal article" date="2018" name="Cell">
        <title>Aster proteins facilitate nonvesicular plasma membrane to ER cholesterol transport in mammalian cells.</title>
        <authorList>
            <person name="Sandhu J."/>
            <person name="Li S."/>
            <person name="Fairall L."/>
            <person name="Pfisterer S.G."/>
            <person name="Gurnett J.E."/>
            <person name="Xiao X."/>
            <person name="Weston T.A."/>
            <person name="Vashi D."/>
            <person name="Ferrari A."/>
            <person name="Orozco J.L."/>
            <person name="Hartman C.L."/>
            <person name="Strugatsky D."/>
            <person name="Lee S.D."/>
            <person name="He C."/>
            <person name="Hong C."/>
            <person name="Jiang H."/>
            <person name="Bentolila L.A."/>
            <person name="Gatta A.T."/>
            <person name="Levine T.P."/>
            <person name="Ferng A."/>
            <person name="Lee R."/>
            <person name="Ford D.A."/>
            <person name="Young S.G."/>
            <person name="Ikonen E."/>
            <person name="Schwabe J.W.R."/>
            <person name="Tontonoz P."/>
        </authorList>
    </citation>
    <scope>SUBCELLULAR LOCATION</scope>
</reference>
<comment type="function">
    <text evidence="1">Cholesterol transporter that mediates non-vesicular transport of cholesterol from the plasma membrane (PM) to the endoplasmic reticulum (ER) (By similarity). Contains unique domains for binding cholesterol and the PM, thereby serving as a molecular bridge for the transfer of cholesterol from the PM to the ER (By similarity). Plays a crucial role in cholesterol homeostasis in the adrenal gland and has the unique ability to localize to the PM based on the level of membrane cholesterol (By similarity). In lipid-poor conditions localizes to the ER membrane and in response to excess cholesterol in the PM is recruited to the endoplasmic reticulum-plasma membrane contact sites (EPCS) which is mediated by the GRAM domain (By similarity). At the EPCS, the sterol-binding VASt/ASTER domain binds to the cholesterol in the PM and facilitates its transfer from the PM to ER (By similarity).</text>
</comment>
<comment type="subcellular location">
    <subcellularLocation>
        <location evidence="5">Endoplasmic reticulum membrane</location>
        <topology evidence="2">Single-pass membrane protein</topology>
    </subcellularLocation>
    <subcellularLocation>
        <location evidence="5">Cell membrane</location>
        <topology evidence="2">Single-pass membrane protein</topology>
    </subcellularLocation>
    <text evidence="5">In lipid-poor conditions localizes to the ER membrane and in response to excess cholesterol in the PM is recruited to the endoplasmic reticulum-plasma membrane contact sites (EPCS).</text>
</comment>
<comment type="alternative products">
    <event type="alternative splicing"/>
    <isoform>
        <id>Q3KR37-1</id>
        <name>1</name>
        <sequence type="displayed"/>
    </isoform>
    <isoform>
        <id>Q3KR37-2</id>
        <name>2</name>
        <sequence type="described" ref="VSP_025470"/>
    </isoform>
    <isoform>
        <id>Q3KR37-3</id>
        <name>3</name>
        <sequence type="described" ref="VSP_025469 VSP_025471 VSP_025472"/>
    </isoform>
    <isoform>
        <id>Q3KR37-4</id>
        <name>4</name>
        <sequence type="described" ref="VSP_057573"/>
    </isoform>
</comment>
<comment type="domain">
    <text evidence="1">GRAM domain binds phosphatidylserine in the PM and mediates protein recruitment to endoplasmic reticulum-plasma membrane contact sites (EPCS) in response to excess cholesterol in the PM.</text>
</comment>
<comment type="domain">
    <text evidence="1">VASt (VAD1 Analog of StAR-related lipid transfer) domain, also known as ASTER (Greek for star) domain is a sterol-binding domain.</text>
</comment>
<comment type="sequence caution" evidence="8">
    <conflict type="erroneous initiation">
        <sequence resource="EMBL-CDS" id="BAA86515"/>
    </conflict>
    <text>Extended N-terminus.</text>
</comment>
<name>ASTRB_HUMAN</name>
<organism>
    <name type="scientific">Homo sapiens</name>
    <name type="common">Human</name>
    <dbReference type="NCBI Taxonomy" id="9606"/>
    <lineage>
        <taxon>Eukaryota</taxon>
        <taxon>Metazoa</taxon>
        <taxon>Chordata</taxon>
        <taxon>Craniata</taxon>
        <taxon>Vertebrata</taxon>
        <taxon>Euteleostomi</taxon>
        <taxon>Mammalia</taxon>
        <taxon>Eutheria</taxon>
        <taxon>Euarchontoglires</taxon>
        <taxon>Primates</taxon>
        <taxon>Haplorrhini</taxon>
        <taxon>Catarrhini</taxon>
        <taxon>Hominidae</taxon>
        <taxon>Homo</taxon>
    </lineage>
</organism>
<accession>Q3KR37</accession>
<accession>B3KXJ5</accession>
<accession>E7EPH8</accession>
<accession>Q6UW85</accession>
<accession>Q9ULL9</accession>
<dbReference type="EMBL" id="AB033027">
    <property type="protein sequence ID" value="BAA86515.1"/>
    <property type="status" value="ALT_INIT"/>
    <property type="molecule type" value="mRNA"/>
</dbReference>
<dbReference type="EMBL" id="AY358924">
    <property type="protein sequence ID" value="AAQ89283.1"/>
    <property type="molecule type" value="mRNA"/>
</dbReference>
<dbReference type="EMBL" id="AK127457">
    <property type="protein sequence ID" value="BAG54507.1"/>
    <property type="molecule type" value="mRNA"/>
</dbReference>
<dbReference type="EMBL" id="AP000841">
    <property type="status" value="NOT_ANNOTATED_CDS"/>
    <property type="molecule type" value="Genomic_DNA"/>
</dbReference>
<dbReference type="EMBL" id="AP002765">
    <property type="status" value="NOT_ANNOTATED_CDS"/>
    <property type="molecule type" value="Genomic_DNA"/>
</dbReference>
<dbReference type="EMBL" id="BC105741">
    <property type="protein sequence ID" value="AAI05742.1"/>
    <property type="molecule type" value="mRNA"/>
</dbReference>
<dbReference type="EMBL" id="BC105932">
    <property type="protein sequence ID" value="AAI05933.1"/>
    <property type="molecule type" value="mRNA"/>
</dbReference>
<dbReference type="EMBL" id="BC105931">
    <property type="protein sequence ID" value="AAI05932.1"/>
    <property type="molecule type" value="mRNA"/>
</dbReference>
<dbReference type="EMBL" id="BC107480">
    <property type="protein sequence ID" value="AAI07481.1"/>
    <property type="molecule type" value="mRNA"/>
</dbReference>
<dbReference type="CCDS" id="CCDS53720.1">
    <molecule id="Q3KR37-1"/>
</dbReference>
<dbReference type="CCDS" id="CCDS66253.1">
    <molecule id="Q3KR37-4"/>
</dbReference>
<dbReference type="CCDS" id="CCDS66254.1">
    <molecule id="Q3KR37-2"/>
</dbReference>
<dbReference type="RefSeq" id="NP_001273492.1">
    <molecule id="Q3KR37-4"/>
    <property type="nucleotide sequence ID" value="NM_001286563.3"/>
</dbReference>
<dbReference type="RefSeq" id="NP_001273493.1">
    <molecule id="Q3KR37-2"/>
    <property type="nucleotide sequence ID" value="NM_001286564.3"/>
</dbReference>
<dbReference type="RefSeq" id="NP_001373961.1">
    <molecule id="Q3KR37-2"/>
    <property type="nucleotide sequence ID" value="NM_001387032.1"/>
</dbReference>
<dbReference type="RefSeq" id="NP_001373962.1">
    <molecule id="Q3KR37-2"/>
    <property type="nucleotide sequence ID" value="NM_001387033.1"/>
</dbReference>
<dbReference type="RefSeq" id="NP_065767.1">
    <molecule id="Q3KR37-1"/>
    <property type="nucleotide sequence ID" value="NM_020716.4"/>
</dbReference>
<dbReference type="RefSeq" id="XP_016873536.1">
    <property type="nucleotide sequence ID" value="XM_017018047.1"/>
</dbReference>
<dbReference type="RefSeq" id="XP_016873537.1">
    <property type="nucleotide sequence ID" value="XM_017018048.1"/>
</dbReference>
<dbReference type="SMR" id="Q3KR37"/>
<dbReference type="BioGRID" id="121546">
    <property type="interactions" value="80"/>
</dbReference>
<dbReference type="FunCoup" id="Q3KR37">
    <property type="interactions" value="1145"/>
</dbReference>
<dbReference type="IntAct" id="Q3KR37">
    <property type="interactions" value="43"/>
</dbReference>
<dbReference type="STRING" id="9606.ENSP00000402457"/>
<dbReference type="TCDB" id="9.B.198.2.5">
    <property type="family name" value="the membrane-anchored lipid-binding protein (lam) family"/>
</dbReference>
<dbReference type="iPTMnet" id="Q3KR37"/>
<dbReference type="PhosphoSitePlus" id="Q3KR37"/>
<dbReference type="SwissPalm" id="Q3KR37"/>
<dbReference type="BioMuta" id="GRAMD1B"/>
<dbReference type="DMDM" id="121942617"/>
<dbReference type="jPOST" id="Q3KR37"/>
<dbReference type="MassIVE" id="Q3KR37"/>
<dbReference type="PaxDb" id="9606-ENSP00000402457"/>
<dbReference type="PeptideAtlas" id="Q3KR37"/>
<dbReference type="ProteomicsDB" id="17363"/>
<dbReference type="ProteomicsDB" id="61737">
    <molecule id="Q3KR37-1"/>
</dbReference>
<dbReference type="ProteomicsDB" id="61738">
    <molecule id="Q3KR37-2"/>
</dbReference>
<dbReference type="ProteomicsDB" id="61739">
    <molecule id="Q3KR37-3"/>
</dbReference>
<dbReference type="Pumba" id="Q3KR37"/>
<dbReference type="Antibodypedia" id="2247">
    <property type="antibodies" value="60 antibodies from 17 providers"/>
</dbReference>
<dbReference type="DNASU" id="57476"/>
<dbReference type="Ensembl" id="ENST00000450171.2">
    <molecule id="Q3KR37-3"/>
    <property type="protein sequence ID" value="ENSP00000388458.2"/>
    <property type="gene ID" value="ENSG00000023171.20"/>
</dbReference>
<dbReference type="Ensembl" id="ENST00000456860.6">
    <molecule id="Q3KR37-4"/>
    <property type="protein sequence ID" value="ENSP00000402457.2"/>
    <property type="gene ID" value="ENSG00000023171.20"/>
</dbReference>
<dbReference type="Ensembl" id="ENST00000529432.5">
    <molecule id="Q3KR37-2"/>
    <property type="protein sequence ID" value="ENSP00000432987.1"/>
    <property type="gene ID" value="ENSG00000023171.20"/>
</dbReference>
<dbReference type="Ensembl" id="ENST00000529750.5">
    <molecule id="Q3KR37-1"/>
    <property type="protein sequence ID" value="ENSP00000436500.1"/>
    <property type="gene ID" value="ENSG00000023171.20"/>
</dbReference>
<dbReference type="GeneID" id="57476"/>
<dbReference type="KEGG" id="hsa:57476"/>
<dbReference type="UCSC" id="uc001pyw.4">
    <property type="organism name" value="human"/>
</dbReference>
<dbReference type="UCSC" id="uc001pyx.4">
    <molecule id="Q3KR37-1"/>
    <property type="organism name" value="human"/>
</dbReference>
<dbReference type="AGR" id="HGNC:29214"/>
<dbReference type="CTD" id="57476"/>
<dbReference type="DisGeNET" id="57476"/>
<dbReference type="GeneCards" id="GRAMD1B"/>
<dbReference type="HGNC" id="HGNC:29214">
    <property type="gene designation" value="GRAMD1B"/>
</dbReference>
<dbReference type="HPA" id="ENSG00000023171">
    <property type="expression patterns" value="Group enriched (adrenal gland, brain, retina)"/>
</dbReference>
<dbReference type="MIM" id="620179">
    <property type="type" value="gene"/>
</dbReference>
<dbReference type="neXtProt" id="NX_Q3KR37"/>
<dbReference type="OpenTargets" id="ENSG00000023171"/>
<dbReference type="PharmGKB" id="PA142671708"/>
<dbReference type="VEuPathDB" id="HostDB:ENSG00000023171"/>
<dbReference type="eggNOG" id="KOG1032">
    <property type="taxonomic scope" value="Eukaryota"/>
</dbReference>
<dbReference type="GeneTree" id="ENSGT00940000156649"/>
<dbReference type="HOGENOM" id="CLU_015189_1_0_1"/>
<dbReference type="InParanoid" id="Q3KR37"/>
<dbReference type="OrthoDB" id="2162691at2759"/>
<dbReference type="PAN-GO" id="Q3KR37">
    <property type="GO annotations" value="6 GO annotations based on evolutionary models"/>
</dbReference>
<dbReference type="PhylomeDB" id="Q3KR37"/>
<dbReference type="TreeFam" id="TF327695"/>
<dbReference type="PathwayCommons" id="Q3KR37"/>
<dbReference type="SignaLink" id="Q3KR37"/>
<dbReference type="BioGRID-ORCS" id="57476">
    <property type="hits" value="13 hits in 1137 CRISPR screens"/>
</dbReference>
<dbReference type="ChiTaRS" id="GRAMD1B">
    <property type="organism name" value="human"/>
</dbReference>
<dbReference type="GenomeRNAi" id="57476"/>
<dbReference type="Pharos" id="Q3KR37">
    <property type="development level" value="Tbio"/>
</dbReference>
<dbReference type="PRO" id="PR:Q3KR37"/>
<dbReference type="Proteomes" id="UP000005640">
    <property type="component" value="Chromosome 11"/>
</dbReference>
<dbReference type="RNAct" id="Q3KR37">
    <property type="molecule type" value="protein"/>
</dbReference>
<dbReference type="Bgee" id="ENSG00000023171">
    <property type="expression patterns" value="Expressed in adrenal tissue and 175 other cell types or tissues"/>
</dbReference>
<dbReference type="ExpressionAtlas" id="Q3KR37">
    <property type="expression patterns" value="baseline and differential"/>
</dbReference>
<dbReference type="GO" id="GO:0005789">
    <property type="term" value="C:endoplasmic reticulum membrane"/>
    <property type="evidence" value="ECO:0000314"/>
    <property type="project" value="UniProtKB"/>
</dbReference>
<dbReference type="GO" id="GO:0140268">
    <property type="term" value="C:endoplasmic reticulum-plasma membrane contact site"/>
    <property type="evidence" value="ECO:0000314"/>
    <property type="project" value="UniProtKB"/>
</dbReference>
<dbReference type="GO" id="GO:0016020">
    <property type="term" value="C:membrane"/>
    <property type="evidence" value="ECO:0007005"/>
    <property type="project" value="UniProtKB"/>
</dbReference>
<dbReference type="GO" id="GO:0005886">
    <property type="term" value="C:plasma membrane"/>
    <property type="evidence" value="ECO:0000314"/>
    <property type="project" value="UniProtKB"/>
</dbReference>
<dbReference type="GO" id="GO:0015485">
    <property type="term" value="F:cholesterol binding"/>
    <property type="evidence" value="ECO:0000250"/>
    <property type="project" value="UniProtKB"/>
</dbReference>
<dbReference type="GO" id="GO:0120020">
    <property type="term" value="F:cholesterol transfer activity"/>
    <property type="evidence" value="ECO:0000250"/>
    <property type="project" value="UniProtKB"/>
</dbReference>
<dbReference type="GO" id="GO:0070300">
    <property type="term" value="F:phosphatidic acid binding"/>
    <property type="evidence" value="ECO:0000250"/>
    <property type="project" value="UniProtKB"/>
</dbReference>
<dbReference type="GO" id="GO:0001786">
    <property type="term" value="F:phosphatidylserine binding"/>
    <property type="evidence" value="ECO:0000250"/>
    <property type="project" value="UniProtKB"/>
</dbReference>
<dbReference type="GO" id="GO:0071397">
    <property type="term" value="P:cellular response to cholesterol"/>
    <property type="evidence" value="ECO:0000250"/>
    <property type="project" value="UniProtKB"/>
</dbReference>
<dbReference type="GO" id="GO:0042632">
    <property type="term" value="P:cholesterol homeostasis"/>
    <property type="evidence" value="ECO:0000250"/>
    <property type="project" value="UniProtKB"/>
</dbReference>
<dbReference type="GO" id="GO:0032366">
    <property type="term" value="P:intracellular sterol transport"/>
    <property type="evidence" value="ECO:0000318"/>
    <property type="project" value="GO_Central"/>
</dbReference>
<dbReference type="CDD" id="cd13220">
    <property type="entry name" value="PH-GRAM_GRAMDC"/>
    <property type="match status" value="1"/>
</dbReference>
<dbReference type="FunFam" id="2.30.29.30:FF:000008">
    <property type="entry name" value="GRAM domain containing 1B"/>
    <property type="match status" value="1"/>
</dbReference>
<dbReference type="Gene3D" id="2.30.29.30">
    <property type="entry name" value="Pleckstrin-homology domain (PH domain)/Phosphotyrosine-binding domain (PTB)"/>
    <property type="match status" value="1"/>
</dbReference>
<dbReference type="InterPro" id="IPR051482">
    <property type="entry name" value="Cholesterol_transport"/>
</dbReference>
<dbReference type="InterPro" id="IPR004182">
    <property type="entry name" value="GRAM"/>
</dbReference>
<dbReference type="InterPro" id="IPR011993">
    <property type="entry name" value="PH-like_dom_sf"/>
</dbReference>
<dbReference type="InterPro" id="IPR031968">
    <property type="entry name" value="VASt"/>
</dbReference>
<dbReference type="PANTHER" id="PTHR23319">
    <property type="entry name" value="GRAM DOMAIN CONTAINING 1B, ISOFORM E"/>
    <property type="match status" value="1"/>
</dbReference>
<dbReference type="PANTHER" id="PTHR23319:SF3">
    <property type="entry name" value="PROTEIN ASTER-B"/>
    <property type="match status" value="1"/>
</dbReference>
<dbReference type="Pfam" id="PF02893">
    <property type="entry name" value="GRAM"/>
    <property type="match status" value="1"/>
</dbReference>
<dbReference type="Pfam" id="PF16016">
    <property type="entry name" value="VASt"/>
    <property type="match status" value="1"/>
</dbReference>
<dbReference type="SMART" id="SM00568">
    <property type="entry name" value="GRAM"/>
    <property type="match status" value="1"/>
</dbReference>
<dbReference type="PROSITE" id="PS51778">
    <property type="entry name" value="VAST"/>
    <property type="match status" value="1"/>
</dbReference>
<protein>
    <recommendedName>
        <fullName evidence="1">Protein Aster-B</fullName>
    </recommendedName>
    <alternativeName>
        <fullName>GRAM domain-containing protein 1B</fullName>
    </alternativeName>
</protein>
<evidence type="ECO:0000250" key="1">
    <source>
        <dbReference type="UniProtKB" id="Q80TI0"/>
    </source>
</evidence>
<evidence type="ECO:0000255" key="2"/>
<evidence type="ECO:0000255" key="3">
    <source>
        <dbReference type="PROSITE-ProRule" id="PRU01114"/>
    </source>
</evidence>
<evidence type="ECO:0000256" key="4">
    <source>
        <dbReference type="SAM" id="MobiDB-lite"/>
    </source>
</evidence>
<evidence type="ECO:0000269" key="5">
    <source>
    </source>
</evidence>
<evidence type="ECO:0000303" key="6">
    <source>
    </source>
</evidence>
<evidence type="ECO:0000303" key="7">
    <source>
    </source>
</evidence>
<evidence type="ECO:0000305" key="8"/>
<evidence type="ECO:0007744" key="9">
    <source>
    </source>
</evidence>
<evidence type="ECO:0007744" key="10">
    <source>
    </source>
</evidence>
<keyword id="KW-0025">Alternative splicing</keyword>
<keyword id="KW-1003">Cell membrane</keyword>
<keyword id="KW-0256">Endoplasmic reticulum</keyword>
<keyword id="KW-0445">Lipid transport</keyword>
<keyword id="KW-0446">Lipid-binding</keyword>
<keyword id="KW-0472">Membrane</keyword>
<keyword id="KW-0597">Phosphoprotein</keyword>
<keyword id="KW-1267">Proteomics identification</keyword>
<keyword id="KW-1185">Reference proteome</keyword>
<keyword id="KW-0812">Transmembrane</keyword>
<keyword id="KW-1133">Transmembrane helix</keyword>
<keyword id="KW-0813">Transport</keyword>
<sequence length="738" mass="85400">MKGFKLSCTASNSNRSTPACSPILRKRSRSPTPQNQDGDTMVEKGSDHSSDKSPSTPEQGVQRSCSSQSGRSGGKNSKKSQSWYNVLSPTYKQRNEDFRKLFKQLPDTERLIVDYSCALQRDILLQGRLYLSENWICFYSNIFRWETLLTVRLKDICSMTKEKTARLIPNAIQVCTDSEKHFFTSFGARDRTYMMMFRLWQNALLEKPLCPKELWHFVHQCYGNELGLTSDDEDYVPPDDDFNTMGYCEEIPVEENEVNDSSSKSSIETKPDASPQLPKKSITNSTLTSTGSSEAPVSFDGLPLEEEALEGDGSLEKELAIDNIMGEKIEMIAPVNSPSLDFNDNEDIPTELSDSSDTHDEGEVQAFYEDLSGRQYVNEVFNFSVDKLYDLLFTNSPFQRDFMEQRRFSDIIFHPWKKEENGNQSRVILYTITLTNPLAPKTATVRETQTMYKASQESECYVIDAEVLTHDVPYHDYFYTINRYTLTRVARNKSRLRVSTELRYRKQPWGLVKTFIEKNFWSGLEDYFRHLESELAKTESTYLAEMHRQSPKEKASKTTTVRRRKRPHAHLRVPHLEEVMSPVTTPTDEDVGHRIKHVAGSTQTRHIPEDTPNGFHLQSVSKLLLVISCVICFSLVLLVILNMMLFYKLWMLEYTTQTLTAWQGLRLQERLPQSQTEWAQLLESQQKYHDTELQKWREIIKSSVMLLDQMKDSLINLQNGIRSRDYTSESEEKRNRYH</sequence>
<gene>
    <name type="primary">GRAMD1B</name>
    <name type="synonym">KIAA1201</name>
    <name type="ORF">UNQ3032/PRO9834</name>
</gene>
<proteinExistence type="evidence at protein level"/>